<comment type="function">
    <text evidence="1">May be an inhibitor of SLC12A1. Seems to correspond to a subunit of a multimeric transport system and thus, additional subunits may be required for its function. May play a role in lysosomal ion flux and osmoregulation.</text>
</comment>
<comment type="subunit">
    <text evidence="1">Interacts with SLC12A1.</text>
</comment>
<comment type="subcellular location">
    <subcellularLocation>
        <location evidence="1">Cell membrane</location>
        <topology evidence="1">Multi-pass membrane protein</topology>
    </subcellularLocation>
    <subcellularLocation>
        <location evidence="1">Lysosome membrane</location>
    </subcellularLocation>
</comment>
<comment type="similarity">
    <text evidence="4">Belongs to the SLC12A transporter family.</text>
</comment>
<comment type="sequence caution" evidence="4">
    <conflict type="frameshift">
        <sequence resource="EMBL-CDS" id="BAB40440"/>
    </conflict>
</comment>
<keyword id="KW-1003">Cell membrane</keyword>
<keyword id="KW-0325">Glycoprotein</keyword>
<keyword id="KW-0458">Lysosome</keyword>
<keyword id="KW-0472">Membrane</keyword>
<keyword id="KW-0597">Phosphoprotein</keyword>
<keyword id="KW-1185">Reference proteome</keyword>
<keyword id="KW-0812">Transmembrane</keyword>
<keyword id="KW-1133">Transmembrane helix</keyword>
<keyword id="KW-0813">Transport</keyword>
<accession>Q66HR0</accession>
<accession>Q99NC8</accession>
<name>S12A9_RAT</name>
<gene>
    <name type="primary">Slc12a9</name>
    <name type="synonym">Ccc6</name>
</gene>
<proteinExistence type="evidence at protein level"/>
<evidence type="ECO:0000250" key="1">
    <source>
        <dbReference type="UniProtKB" id="Q9BXP2"/>
    </source>
</evidence>
<evidence type="ECO:0000255" key="2"/>
<evidence type="ECO:0000256" key="3">
    <source>
        <dbReference type="SAM" id="MobiDB-lite"/>
    </source>
</evidence>
<evidence type="ECO:0000305" key="4"/>
<evidence type="ECO:0007744" key="5">
    <source>
    </source>
</evidence>
<protein>
    <recommendedName>
        <fullName>Solute carrier family 12 member 9</fullName>
    </recommendedName>
    <alternativeName>
        <fullName>Cation-chloride cotransporter 6</fullName>
    </alternativeName>
</protein>
<reference key="1">
    <citation type="submission" date="1999-02" db="EMBL/GenBank/DDBJ databases">
        <title>Molecular cloning of a new member of cation-chloride cotransporter.</title>
        <authorList>
            <person name="Imai M."/>
            <person name="Ishibashi K."/>
        </authorList>
    </citation>
    <scope>NUCLEOTIDE SEQUENCE [MRNA]</scope>
    <source>
        <tissue>Kidney</tissue>
    </source>
</reference>
<reference key="2">
    <citation type="journal article" date="2004" name="Genome Res.">
        <title>The status, quality, and expansion of the NIH full-length cDNA project: the Mammalian Gene Collection (MGC).</title>
        <authorList>
            <consortium name="The MGC Project Team"/>
        </authorList>
    </citation>
    <scope>NUCLEOTIDE SEQUENCE [LARGE SCALE MRNA]</scope>
    <source>
        <tissue>Kidney</tissue>
    </source>
</reference>
<reference key="3">
    <citation type="journal article" date="2012" name="Nat. Commun.">
        <title>Quantitative maps of protein phosphorylation sites across 14 different rat organs and tissues.</title>
        <authorList>
            <person name="Lundby A."/>
            <person name="Secher A."/>
            <person name="Lage K."/>
            <person name="Nordsborg N.B."/>
            <person name="Dmytriyev A."/>
            <person name="Lundby C."/>
            <person name="Olsen J.V."/>
        </authorList>
    </citation>
    <scope>PHOSPHORYLATION [LARGE SCALE ANALYSIS] AT SER-6</scope>
    <scope>IDENTIFICATION BY MASS SPECTROMETRY [LARGE SCALE ANALYSIS]</scope>
</reference>
<sequence>MASENSPLLAYRLLGEEGAAFPPNGAGGSGVASARKLSTFLGVVVPTVLSMFSIVVFLRIGFVVGHAGLLQALAMLLVAYVILALTVLSVCAIATNGAVRGGGAYFMISRTLGPEVGGSIGLMFYLANVCGCAVSLLGLVESILDVFGADVTGSSGIKVLPQGYGWNLLYGSLLLGLVGGVCALGAGLYARASFLTFLLVSGSLASVLVSFVAVGPRNITLAPRPGTNGSSVPPRHGHFTGFNGSTLKDNLGAGYAEDYTTGAMMTFASVFAVLFNGCTGIMAGANMSGELKDPSRAIPLGTIIAVAYTFFIYILLFFLSSFTCDRALLQGDYGFFRDISLWPPLVLIGIYATALSASMSSLIGASRILHALAQDDLFGVILAPAKVVSGGGNPWGAVLYSWGLVQLVLLAGKLNTLAAVVTVFYLVAYAAVDLSCLSLEWASAPNFRPTFSLFSWHTCLLGVASCLLMMFLISPGAAGGSLLLMGLLSALLTARGGPSSWGYVSQALLFHQVRKYLLRLDVRKEHVKFWRPQLLLLVGNPRGALPLLRLANQLKKGGLYVLGHVTLGDLDSLPSDPVQPQYGAWLSLVDLAQVKAFVDLTLSPSVRQGAQHLLRISGLGGMKPNTLVLGFYDDAPPQDHFLTDPAFSEPAEGTREGGSPALSTLFPPPRAPGSPRALSPQDYVATVADALKMNKNVVLARACGALPPERLSRGSGSSAQLHHVDVWPLNLLRPRGGPGYVDVCGLFLLQMATILSMVPAWHSARLRIFLCLGPREAPGAAEGRLRALLSQLRIRAEVQEVVWGEGAEAGEPEEEEGDFVNGGRGDEEAEALACSANALVRAQQGRGTGGGPGGPEGRDGEEGPTTALTFLYLPRPPADPARYPRYLALLETLSRDLGPTLLIHGVTPVTCTDL</sequence>
<organism>
    <name type="scientific">Rattus norvegicus</name>
    <name type="common">Rat</name>
    <dbReference type="NCBI Taxonomy" id="10116"/>
    <lineage>
        <taxon>Eukaryota</taxon>
        <taxon>Metazoa</taxon>
        <taxon>Chordata</taxon>
        <taxon>Craniata</taxon>
        <taxon>Vertebrata</taxon>
        <taxon>Euteleostomi</taxon>
        <taxon>Mammalia</taxon>
        <taxon>Eutheria</taxon>
        <taxon>Euarchontoglires</taxon>
        <taxon>Glires</taxon>
        <taxon>Rodentia</taxon>
        <taxon>Myomorpha</taxon>
        <taxon>Muroidea</taxon>
        <taxon>Muridae</taxon>
        <taxon>Murinae</taxon>
        <taxon>Rattus</taxon>
    </lineage>
</organism>
<dbReference type="EMBL" id="AB023645">
    <property type="protein sequence ID" value="BAB40440.1"/>
    <property type="status" value="ALT_FRAME"/>
    <property type="molecule type" value="mRNA"/>
</dbReference>
<dbReference type="EMBL" id="BC081728">
    <property type="protein sequence ID" value="AAH81728.1"/>
    <property type="molecule type" value="mRNA"/>
</dbReference>
<dbReference type="RefSeq" id="NP_599232.2">
    <property type="nucleotide sequence ID" value="NM_134405.2"/>
</dbReference>
<dbReference type="RefSeq" id="XP_038944977.1">
    <property type="nucleotide sequence ID" value="XM_039089049.2"/>
</dbReference>
<dbReference type="SMR" id="Q66HR0"/>
<dbReference type="BioGRID" id="251253">
    <property type="interactions" value="1"/>
</dbReference>
<dbReference type="FunCoup" id="Q66HR0">
    <property type="interactions" value="1066"/>
</dbReference>
<dbReference type="IntAct" id="Q66HR0">
    <property type="interactions" value="6"/>
</dbReference>
<dbReference type="MINT" id="Q66HR0"/>
<dbReference type="STRING" id="10116.ENSRNOP00000066554"/>
<dbReference type="GlyCosmos" id="Q66HR0">
    <property type="glycosylation" value="3 sites, No reported glycans"/>
</dbReference>
<dbReference type="GlyGen" id="Q66HR0">
    <property type="glycosylation" value="4 sites"/>
</dbReference>
<dbReference type="iPTMnet" id="Q66HR0"/>
<dbReference type="PhosphoSitePlus" id="Q66HR0"/>
<dbReference type="jPOST" id="Q66HR0"/>
<dbReference type="Ensembl" id="ENSRNOT00000076829.3">
    <property type="protein sequence ID" value="ENSRNOP00000068426.2"/>
    <property type="gene ID" value="ENSRNOG00000048487.4"/>
</dbReference>
<dbReference type="GeneID" id="171443"/>
<dbReference type="KEGG" id="rno:171443"/>
<dbReference type="AGR" id="RGD:620747"/>
<dbReference type="CTD" id="56996"/>
<dbReference type="RGD" id="620747">
    <property type="gene designation" value="Slc12a9"/>
</dbReference>
<dbReference type="eggNOG" id="KOG1288">
    <property type="taxonomic scope" value="Eukaryota"/>
</dbReference>
<dbReference type="GeneTree" id="ENSGT00940000159400"/>
<dbReference type="InParanoid" id="Q66HR0"/>
<dbReference type="OMA" id="NIKYWRP"/>
<dbReference type="OrthoDB" id="2020542at2759"/>
<dbReference type="PhylomeDB" id="Q66HR0"/>
<dbReference type="PRO" id="PR:Q66HR0"/>
<dbReference type="Proteomes" id="UP000002494">
    <property type="component" value="Chromosome 12"/>
</dbReference>
<dbReference type="GO" id="GO:0005765">
    <property type="term" value="C:lysosomal membrane"/>
    <property type="evidence" value="ECO:0007669"/>
    <property type="project" value="UniProtKB-SubCell"/>
</dbReference>
<dbReference type="GO" id="GO:0005886">
    <property type="term" value="C:plasma membrane"/>
    <property type="evidence" value="ECO:0007669"/>
    <property type="project" value="UniProtKB-SubCell"/>
</dbReference>
<dbReference type="GO" id="GO:0015379">
    <property type="term" value="F:potassium:chloride symporter activity"/>
    <property type="evidence" value="ECO:0000318"/>
    <property type="project" value="GO_Central"/>
</dbReference>
<dbReference type="GO" id="GO:0006884">
    <property type="term" value="P:cell volume homeostasis"/>
    <property type="evidence" value="ECO:0000318"/>
    <property type="project" value="GO_Central"/>
</dbReference>
<dbReference type="GO" id="GO:0055064">
    <property type="term" value="P:chloride ion homeostasis"/>
    <property type="evidence" value="ECO:0000318"/>
    <property type="project" value="GO_Central"/>
</dbReference>
<dbReference type="GO" id="GO:1902476">
    <property type="term" value="P:chloride transmembrane transport"/>
    <property type="evidence" value="ECO:0000318"/>
    <property type="project" value="GO_Central"/>
</dbReference>
<dbReference type="GO" id="GO:0055075">
    <property type="term" value="P:potassium ion homeostasis"/>
    <property type="evidence" value="ECO:0000318"/>
    <property type="project" value="GO_Central"/>
</dbReference>
<dbReference type="FunFam" id="1.20.1740.10:FF:000013">
    <property type="entry name" value="Solute carrier family 12 member"/>
    <property type="match status" value="1"/>
</dbReference>
<dbReference type="Gene3D" id="1.20.1740.10">
    <property type="entry name" value="Amino acid/polyamine transporter I"/>
    <property type="match status" value="1"/>
</dbReference>
<dbReference type="InterPro" id="IPR004841">
    <property type="entry name" value="AA-permease/SLC12A_dom"/>
</dbReference>
<dbReference type="InterPro" id="IPR018491">
    <property type="entry name" value="SLC12_C"/>
</dbReference>
<dbReference type="InterPro" id="IPR004842">
    <property type="entry name" value="SLC12A_fam"/>
</dbReference>
<dbReference type="PANTHER" id="PTHR11827:SF98">
    <property type="entry name" value="SOLUTE CARRIER FAMILY 12 MEMBER 9"/>
    <property type="match status" value="1"/>
</dbReference>
<dbReference type="PANTHER" id="PTHR11827">
    <property type="entry name" value="SOLUTE CARRIER FAMILY 12, CATION COTRANSPORTERS"/>
    <property type="match status" value="1"/>
</dbReference>
<dbReference type="Pfam" id="PF00324">
    <property type="entry name" value="AA_permease"/>
    <property type="match status" value="1"/>
</dbReference>
<dbReference type="Pfam" id="PF03522">
    <property type="entry name" value="SLC12"/>
    <property type="match status" value="1"/>
</dbReference>
<feature type="chain" id="PRO_0000331417" description="Solute carrier family 12 member 9">
    <location>
        <begin position="1"/>
        <end position="914"/>
    </location>
</feature>
<feature type="topological domain" description="Cytoplasmic" evidence="2">
    <location>
        <begin position="1"/>
        <end position="36"/>
    </location>
</feature>
<feature type="transmembrane region" description="Helical" evidence="2">
    <location>
        <begin position="37"/>
        <end position="57"/>
    </location>
</feature>
<feature type="topological domain" description="Extracellular" evidence="2">
    <location>
        <begin position="58"/>
        <end position="72"/>
    </location>
</feature>
<feature type="transmembrane region" description="Helical" evidence="2">
    <location>
        <begin position="73"/>
        <end position="93"/>
    </location>
</feature>
<feature type="topological domain" description="Cytoplasmic" evidence="2">
    <location>
        <begin position="94"/>
        <end position="119"/>
    </location>
</feature>
<feature type="transmembrane region" description="Helical" evidence="2">
    <location>
        <begin position="120"/>
        <end position="140"/>
    </location>
</feature>
<feature type="topological domain" description="Extracellular" evidence="2">
    <location>
        <begin position="141"/>
        <end position="167"/>
    </location>
</feature>
<feature type="transmembrane region" description="Helical" evidence="2">
    <location>
        <begin position="168"/>
        <end position="188"/>
    </location>
</feature>
<feature type="topological domain" description="Cytoplasmic" evidence="2">
    <location>
        <begin position="189"/>
        <end position="193"/>
    </location>
</feature>
<feature type="transmembrane region" description="Helical" evidence="2">
    <location>
        <begin position="194"/>
        <end position="214"/>
    </location>
</feature>
<feature type="topological domain" description="Extracellular" evidence="2">
    <location>
        <begin position="215"/>
        <end position="262"/>
    </location>
</feature>
<feature type="transmembrane region" description="Helical" evidence="2">
    <location>
        <begin position="263"/>
        <end position="283"/>
    </location>
</feature>
<feature type="topological domain" description="Cytoplasmic" evidence="2">
    <location>
        <begin position="284"/>
        <end position="297"/>
    </location>
</feature>
<feature type="transmembrane region" description="Helical" evidence="2">
    <location>
        <begin position="298"/>
        <end position="318"/>
    </location>
</feature>
<feature type="topological domain" description="Extracellular" evidence="2">
    <location>
        <begin position="319"/>
        <end position="338"/>
    </location>
</feature>
<feature type="transmembrane region" description="Helical" evidence="2">
    <location>
        <begin position="339"/>
        <end position="359"/>
    </location>
</feature>
<feature type="topological domain" description="Cytoplasmic" evidence="2">
    <location>
        <begin position="360"/>
        <end position="376"/>
    </location>
</feature>
<feature type="transmembrane region" description="Helical" evidence="2">
    <location>
        <begin position="377"/>
        <end position="399"/>
    </location>
</feature>
<feature type="topological domain" description="Extracellular" evidence="2">
    <location>
        <begin position="400"/>
        <end position="416"/>
    </location>
</feature>
<feature type="transmembrane region" description="Helical" evidence="2">
    <location>
        <begin position="417"/>
        <end position="437"/>
    </location>
</feature>
<feature type="topological domain" description="Cytoplasmic" evidence="2">
    <location>
        <begin position="438"/>
        <end position="466"/>
    </location>
</feature>
<feature type="transmembrane region" description="Helical" evidence="2">
    <location>
        <begin position="467"/>
        <end position="487"/>
    </location>
</feature>
<feature type="topological domain" description="Extracellular" evidence="2">
    <location>
        <begin position="488"/>
        <end position="740"/>
    </location>
</feature>
<feature type="transmembrane region" description="Helical" evidence="2">
    <location>
        <begin position="741"/>
        <end position="761"/>
    </location>
</feature>
<feature type="topological domain" description="Cytoplasmic" evidence="2">
    <location>
        <begin position="762"/>
        <end position="914"/>
    </location>
</feature>
<feature type="region of interest" description="Disordered" evidence="3">
    <location>
        <begin position="645"/>
        <end position="678"/>
    </location>
</feature>
<feature type="region of interest" description="Disordered" evidence="3">
    <location>
        <begin position="843"/>
        <end position="864"/>
    </location>
</feature>
<feature type="compositionally biased region" description="Gly residues" evidence="3">
    <location>
        <begin position="846"/>
        <end position="855"/>
    </location>
</feature>
<feature type="modified residue" description="Phosphoserine" evidence="5">
    <location>
        <position position="6"/>
    </location>
</feature>
<feature type="glycosylation site" description="N-linked (GlcNAc...) asparagine" evidence="2">
    <location>
        <position position="218"/>
    </location>
</feature>
<feature type="glycosylation site" description="N-linked (GlcNAc...) asparagine" evidence="2">
    <location>
        <position position="228"/>
    </location>
</feature>
<feature type="glycosylation site" description="N-linked (GlcNAc...) asparagine" evidence="2">
    <location>
        <position position="243"/>
    </location>
</feature>
<feature type="sequence conflict" description="In Ref. 1; BAB40440." evidence="4" ref="1">
    <original>R</original>
    <variation>K</variation>
    <location>
        <position position="59"/>
    </location>
</feature>
<feature type="sequence conflict" description="In Ref. 1; BAB40440." evidence="4" ref="1">
    <original>D</original>
    <variation>G</variation>
    <location>
        <position position="293"/>
    </location>
</feature>
<feature type="sequence conflict" description="In Ref. 1; BAB40440." evidence="4" ref="1">
    <original>A</original>
    <variation>S</variation>
    <location>
        <position position="584"/>
    </location>
</feature>
<feature type="sequence conflict" description="In Ref. 1; BAB40440." evidence="4" ref="1">
    <original>E</original>
    <variation>K</variation>
    <location>
        <position position="656"/>
    </location>
</feature>